<dbReference type="EC" id="1.2.1.8" evidence="1"/>
<dbReference type="EMBL" id="CP001389">
    <property type="protein sequence ID" value="ACP24493.1"/>
    <property type="molecule type" value="Genomic_DNA"/>
</dbReference>
<dbReference type="RefSeq" id="WP_012707278.1">
    <property type="nucleotide sequence ID" value="NC_012587.1"/>
</dbReference>
<dbReference type="RefSeq" id="YP_002825246.1">
    <property type="nucleotide sequence ID" value="NC_012587.1"/>
</dbReference>
<dbReference type="SMR" id="C3MIE5"/>
<dbReference type="STRING" id="394.NGR_c07000"/>
<dbReference type="KEGG" id="rhi:NGR_c07000"/>
<dbReference type="PATRIC" id="fig|394.7.peg.3515"/>
<dbReference type="eggNOG" id="COG1012">
    <property type="taxonomic scope" value="Bacteria"/>
</dbReference>
<dbReference type="HOGENOM" id="CLU_005391_0_0_5"/>
<dbReference type="OrthoDB" id="9772584at2"/>
<dbReference type="UniPathway" id="UPA00529">
    <property type="reaction ID" value="UER00386"/>
</dbReference>
<dbReference type="Proteomes" id="UP000001054">
    <property type="component" value="Chromosome"/>
</dbReference>
<dbReference type="GO" id="GO:0008802">
    <property type="term" value="F:betaine-aldehyde dehydrogenase (NAD+) activity"/>
    <property type="evidence" value="ECO:0007669"/>
    <property type="project" value="UniProtKB-UniRule"/>
</dbReference>
<dbReference type="GO" id="GO:0046872">
    <property type="term" value="F:metal ion binding"/>
    <property type="evidence" value="ECO:0007669"/>
    <property type="project" value="UniProtKB-KW"/>
</dbReference>
<dbReference type="GO" id="GO:0019285">
    <property type="term" value="P:glycine betaine biosynthetic process from choline"/>
    <property type="evidence" value="ECO:0007669"/>
    <property type="project" value="UniProtKB-UniRule"/>
</dbReference>
<dbReference type="CDD" id="cd07090">
    <property type="entry name" value="ALDH_F9_TMBADH"/>
    <property type="match status" value="1"/>
</dbReference>
<dbReference type="FunFam" id="3.40.605.10:FF:000026">
    <property type="entry name" value="Aldehyde dehydrogenase, putative"/>
    <property type="match status" value="1"/>
</dbReference>
<dbReference type="FunFam" id="3.40.309.10:FF:000014">
    <property type="entry name" value="NAD/NADP-dependent betaine aldehyde dehydrogenase"/>
    <property type="match status" value="1"/>
</dbReference>
<dbReference type="FunFam" id="3.40.605.10:FF:000007">
    <property type="entry name" value="NAD/NADP-dependent betaine aldehyde dehydrogenase"/>
    <property type="match status" value="1"/>
</dbReference>
<dbReference type="Gene3D" id="3.40.605.10">
    <property type="entry name" value="Aldehyde Dehydrogenase, Chain A, domain 1"/>
    <property type="match status" value="1"/>
</dbReference>
<dbReference type="Gene3D" id="3.40.309.10">
    <property type="entry name" value="Aldehyde Dehydrogenase, Chain A, domain 2"/>
    <property type="match status" value="1"/>
</dbReference>
<dbReference type="HAMAP" id="MF_00804">
    <property type="entry name" value="BADH"/>
    <property type="match status" value="1"/>
</dbReference>
<dbReference type="InterPro" id="IPR016161">
    <property type="entry name" value="Ald_DH/histidinol_DH"/>
</dbReference>
<dbReference type="InterPro" id="IPR016163">
    <property type="entry name" value="Ald_DH_C"/>
</dbReference>
<dbReference type="InterPro" id="IPR016160">
    <property type="entry name" value="Ald_DH_CS_CYS"/>
</dbReference>
<dbReference type="InterPro" id="IPR029510">
    <property type="entry name" value="Ald_DH_CS_GLU"/>
</dbReference>
<dbReference type="InterPro" id="IPR016162">
    <property type="entry name" value="Ald_DH_N"/>
</dbReference>
<dbReference type="InterPro" id="IPR015590">
    <property type="entry name" value="Aldehyde_DH_dom"/>
</dbReference>
<dbReference type="InterPro" id="IPR011264">
    <property type="entry name" value="BADH"/>
</dbReference>
<dbReference type="NCBIfam" id="TIGR01804">
    <property type="entry name" value="BADH"/>
    <property type="match status" value="1"/>
</dbReference>
<dbReference type="NCBIfam" id="NF009725">
    <property type="entry name" value="PRK13252.1"/>
    <property type="match status" value="1"/>
</dbReference>
<dbReference type="PANTHER" id="PTHR11699">
    <property type="entry name" value="ALDEHYDE DEHYDROGENASE-RELATED"/>
    <property type="match status" value="1"/>
</dbReference>
<dbReference type="Pfam" id="PF00171">
    <property type="entry name" value="Aldedh"/>
    <property type="match status" value="1"/>
</dbReference>
<dbReference type="SUPFAM" id="SSF53720">
    <property type="entry name" value="ALDH-like"/>
    <property type="match status" value="1"/>
</dbReference>
<dbReference type="PROSITE" id="PS00070">
    <property type="entry name" value="ALDEHYDE_DEHYDR_CYS"/>
    <property type="match status" value="1"/>
</dbReference>
<dbReference type="PROSITE" id="PS00687">
    <property type="entry name" value="ALDEHYDE_DEHYDR_GLU"/>
    <property type="match status" value="1"/>
</dbReference>
<evidence type="ECO:0000255" key="1">
    <source>
        <dbReference type="HAMAP-Rule" id="MF_00804"/>
    </source>
</evidence>
<comment type="function">
    <text evidence="1">Involved in the biosynthesis of the osmoprotectant glycine betaine. Catalyzes the irreversible oxidation of betaine aldehyde to the corresponding acid.</text>
</comment>
<comment type="catalytic activity">
    <reaction evidence="1">
        <text>betaine aldehyde + NAD(+) + H2O = glycine betaine + NADH + 2 H(+)</text>
        <dbReference type="Rhea" id="RHEA:15305"/>
        <dbReference type="ChEBI" id="CHEBI:15377"/>
        <dbReference type="ChEBI" id="CHEBI:15378"/>
        <dbReference type="ChEBI" id="CHEBI:15710"/>
        <dbReference type="ChEBI" id="CHEBI:17750"/>
        <dbReference type="ChEBI" id="CHEBI:57540"/>
        <dbReference type="ChEBI" id="CHEBI:57945"/>
        <dbReference type="EC" id="1.2.1.8"/>
    </reaction>
    <physiologicalReaction direction="left-to-right" evidence="1">
        <dbReference type="Rhea" id="RHEA:15306"/>
    </physiologicalReaction>
</comment>
<comment type="cofactor">
    <cofactor evidence="1">
        <name>K(+)</name>
        <dbReference type="ChEBI" id="CHEBI:29103"/>
    </cofactor>
    <text evidence="1">Binds 2 potassium ions per subunit.</text>
</comment>
<comment type="pathway">
    <text evidence="1">Amine and polyamine biosynthesis; betaine biosynthesis via choline pathway; betaine from betaine aldehyde: step 1/1.</text>
</comment>
<comment type="subunit">
    <text evidence="1">Dimer of dimers.</text>
</comment>
<comment type="similarity">
    <text evidence="1">Belongs to the aldehyde dehydrogenase family.</text>
</comment>
<sequence>MKAQPKASHFIDGEYVEDTAGTVIESIYPATGEVIARLHAATPDIVEKAIAAAKRAQPEWAAMSPTARGRILKRAAEIMRERNRELSELETLDTGKPIQETIVADPTSGADSFEFFGGIAAAALNGDYIPLGGDFAYTKRVPLGVCVGIGAWNYPQQIACWKGAPALAAGNSMVFKPSENTPLGALKIAEILIEAGLPKGLYNVIQGDRSTGPLLVNHPDVAKVSLTGSVPTGKKVAAAAAAELKHVTMELGGKSPLIVFDDADLESAIGGAMLGNFYSTGQVCSNGTRVFVQRKIKDAFLARLKERTEAIVIGDPMDEATQLGPMVSKAQRDKVLSYIEQGKAEGARLVTGGGIPNAVNTEGTYIQPTVFADVTDEMTIAREEIFGPVMCVLDFDDEAEVVARANATEFGLSAGVFTADLTRAHRVVDQLEAGTLWINTYNLAPVEIPFGGSKQSGFGRENSVAALNHYTELKTVYVGMGKVEAPY</sequence>
<reference key="1">
    <citation type="journal article" date="2009" name="Appl. Environ. Microbiol.">
        <title>Rhizobium sp. strain NGR234 possesses a remarkable number of secretion systems.</title>
        <authorList>
            <person name="Schmeisser C."/>
            <person name="Liesegang H."/>
            <person name="Krysciak D."/>
            <person name="Bakkou N."/>
            <person name="Le Quere A."/>
            <person name="Wollherr A."/>
            <person name="Heinemeyer I."/>
            <person name="Morgenstern B."/>
            <person name="Pommerening-Roeser A."/>
            <person name="Flores M."/>
            <person name="Palacios R."/>
            <person name="Brenner S."/>
            <person name="Gottschalk G."/>
            <person name="Schmitz R.A."/>
            <person name="Broughton W.J."/>
            <person name="Perret X."/>
            <person name="Strittmatter A.W."/>
            <person name="Streit W.R."/>
        </authorList>
    </citation>
    <scope>NUCLEOTIDE SEQUENCE [LARGE SCALE GENOMIC DNA]</scope>
    <source>
        <strain>NBRC 101917 / NGR234</strain>
    </source>
</reference>
<feature type="chain" id="PRO_1000148557" description="Betaine aldehyde dehydrogenase">
    <location>
        <begin position="1"/>
        <end position="487"/>
    </location>
</feature>
<feature type="active site" description="Charge relay system" evidence="1">
    <location>
        <position position="162"/>
    </location>
</feature>
<feature type="active site" description="Proton acceptor" evidence="1">
    <location>
        <position position="250"/>
    </location>
</feature>
<feature type="active site" description="Nucleophile" evidence="1">
    <location>
        <position position="284"/>
    </location>
</feature>
<feature type="active site" description="Charge relay system" evidence="1">
    <location>
        <position position="461"/>
    </location>
</feature>
<feature type="binding site" evidence="1">
    <location>
        <position position="26"/>
    </location>
    <ligand>
        <name>K(+)</name>
        <dbReference type="ChEBI" id="CHEBI:29103"/>
        <label>1</label>
    </ligand>
</feature>
<feature type="binding site" evidence="1">
    <location>
        <position position="27"/>
    </location>
    <ligand>
        <name>K(+)</name>
        <dbReference type="ChEBI" id="CHEBI:29103"/>
        <label>1</label>
    </ligand>
</feature>
<feature type="binding site" evidence="1">
    <location>
        <position position="93"/>
    </location>
    <ligand>
        <name>K(+)</name>
        <dbReference type="ChEBI" id="CHEBI:29103"/>
        <label>1</label>
    </ligand>
</feature>
<feature type="binding site" evidence="1">
    <location>
        <begin position="150"/>
        <end position="152"/>
    </location>
    <ligand>
        <name>NAD(+)</name>
        <dbReference type="ChEBI" id="CHEBI:57540"/>
    </ligand>
</feature>
<feature type="binding site" evidence="1">
    <location>
        <begin position="176"/>
        <end position="179"/>
    </location>
    <ligand>
        <name>NAD(+)</name>
        <dbReference type="ChEBI" id="CHEBI:57540"/>
    </ligand>
</feature>
<feature type="binding site" evidence="1">
    <location>
        <begin position="229"/>
        <end position="232"/>
    </location>
    <ligand>
        <name>NAD(+)</name>
        <dbReference type="ChEBI" id="CHEBI:57540"/>
    </ligand>
</feature>
<feature type="binding site" evidence="1">
    <location>
        <position position="244"/>
    </location>
    <ligand>
        <name>K(+)</name>
        <dbReference type="ChEBI" id="CHEBI:29103"/>
        <label>2</label>
    </ligand>
</feature>
<feature type="binding site" evidence="1">
    <location>
        <position position="252"/>
    </location>
    <ligand>
        <name>NAD(+)</name>
        <dbReference type="ChEBI" id="CHEBI:57540"/>
    </ligand>
</feature>
<feature type="binding site" description="covalent" evidence="1">
    <location>
        <position position="284"/>
    </location>
    <ligand>
        <name>NAD(+)</name>
        <dbReference type="ChEBI" id="CHEBI:57540"/>
    </ligand>
</feature>
<feature type="binding site" evidence="1">
    <location>
        <position position="384"/>
    </location>
    <ligand>
        <name>NAD(+)</name>
        <dbReference type="ChEBI" id="CHEBI:57540"/>
    </ligand>
</feature>
<feature type="binding site" evidence="1">
    <location>
        <position position="454"/>
    </location>
    <ligand>
        <name>K(+)</name>
        <dbReference type="ChEBI" id="CHEBI:29103"/>
        <label>2</label>
    </ligand>
</feature>
<feature type="binding site" evidence="1">
    <location>
        <position position="457"/>
    </location>
    <ligand>
        <name>K(+)</name>
        <dbReference type="ChEBI" id="CHEBI:29103"/>
        <label>2</label>
    </ligand>
</feature>
<feature type="modified residue" description="Cysteine sulfenic acid (-SOH)" evidence="1">
    <location>
        <position position="284"/>
    </location>
</feature>
<accession>C3MIE5</accession>
<organism>
    <name type="scientific">Sinorhizobium fredii (strain NBRC 101917 / NGR234)</name>
    <dbReference type="NCBI Taxonomy" id="394"/>
    <lineage>
        <taxon>Bacteria</taxon>
        <taxon>Pseudomonadati</taxon>
        <taxon>Pseudomonadota</taxon>
        <taxon>Alphaproteobacteria</taxon>
        <taxon>Hyphomicrobiales</taxon>
        <taxon>Rhizobiaceae</taxon>
        <taxon>Sinorhizobium/Ensifer group</taxon>
        <taxon>Sinorhizobium</taxon>
    </lineage>
</organism>
<gene>
    <name evidence="1" type="primary">betB</name>
    <name type="ordered locus">NGR_c07000</name>
</gene>
<name>BETB_SINFN</name>
<proteinExistence type="inferred from homology"/>
<keyword id="KW-0479">Metal-binding</keyword>
<keyword id="KW-0520">NAD</keyword>
<keyword id="KW-0521">NADP</keyword>
<keyword id="KW-0558">Oxidation</keyword>
<keyword id="KW-0560">Oxidoreductase</keyword>
<keyword id="KW-0630">Potassium</keyword>
<keyword id="KW-1185">Reference proteome</keyword>
<protein>
    <recommendedName>
        <fullName evidence="1">Betaine aldehyde dehydrogenase</fullName>
        <shortName evidence="1">BADH</shortName>
        <ecNumber evidence="1">1.2.1.8</ecNumber>
    </recommendedName>
</protein>